<organism>
    <name type="scientific">Escherichia coli O8 (strain IAI1)</name>
    <dbReference type="NCBI Taxonomy" id="585034"/>
    <lineage>
        <taxon>Bacteria</taxon>
        <taxon>Pseudomonadati</taxon>
        <taxon>Pseudomonadota</taxon>
        <taxon>Gammaproteobacteria</taxon>
        <taxon>Enterobacterales</taxon>
        <taxon>Enterobacteriaceae</taxon>
        <taxon>Escherichia</taxon>
    </lineage>
</organism>
<sequence length="299" mass="31988">MAEFPASLLILNGKSTDNLPLREAIMLLREEGMTIHVRVTWEKGDAARYVEEARKLGVATVIAGGGDGTINEVSTALIQCEGDDIPALGILPLGTANDFATSVGIPEALDKALKLAIAGNAIAIDMAQVNKQTCFINMATGGFGTRITTETPEKLKAALGGVSYIIHGLMRMDTLQPDRCEIRGENFHWQGDALVIGIGNGRQAGGGQQLCPNALINDGLLQLRIFTGDEILPALVSTLKSDEDNPNIIEGASSWFDIQAPHEITFNLDGEPLSGQNFHIEILPAALRCRLPPDCPLLR</sequence>
<gene>
    <name evidence="1" type="primary">yegS</name>
    <name type="ordered locus">ECIAI1_2163</name>
</gene>
<name>YEGS_ECO8A</name>
<dbReference type="EC" id="2.7.1.-" evidence="1"/>
<dbReference type="EMBL" id="CU928160">
    <property type="protein sequence ID" value="CAQ99009.1"/>
    <property type="molecule type" value="Genomic_DNA"/>
</dbReference>
<dbReference type="RefSeq" id="WP_000807362.1">
    <property type="nucleotide sequence ID" value="NC_011741.1"/>
</dbReference>
<dbReference type="SMR" id="B7M470"/>
<dbReference type="GeneID" id="75205975"/>
<dbReference type="KEGG" id="ecr:ECIAI1_2163"/>
<dbReference type="HOGENOM" id="CLU_045532_1_1_6"/>
<dbReference type="GO" id="GO:0005737">
    <property type="term" value="C:cytoplasm"/>
    <property type="evidence" value="ECO:0007669"/>
    <property type="project" value="UniProtKB-SubCell"/>
</dbReference>
<dbReference type="GO" id="GO:0005886">
    <property type="term" value="C:plasma membrane"/>
    <property type="evidence" value="ECO:0007669"/>
    <property type="project" value="TreeGrafter"/>
</dbReference>
<dbReference type="GO" id="GO:0005524">
    <property type="term" value="F:ATP binding"/>
    <property type="evidence" value="ECO:0007669"/>
    <property type="project" value="UniProtKB-UniRule"/>
</dbReference>
<dbReference type="GO" id="GO:0001727">
    <property type="term" value="F:lipid kinase activity"/>
    <property type="evidence" value="ECO:0007669"/>
    <property type="project" value="UniProtKB-UniRule"/>
</dbReference>
<dbReference type="GO" id="GO:0000287">
    <property type="term" value="F:magnesium ion binding"/>
    <property type="evidence" value="ECO:0007669"/>
    <property type="project" value="UniProtKB-UniRule"/>
</dbReference>
<dbReference type="GO" id="GO:0008654">
    <property type="term" value="P:phospholipid biosynthetic process"/>
    <property type="evidence" value="ECO:0007669"/>
    <property type="project" value="UniProtKB-UniRule"/>
</dbReference>
<dbReference type="FunFam" id="2.60.200.40:FF:000008">
    <property type="entry name" value="Probable lipid kinase YegS"/>
    <property type="match status" value="1"/>
</dbReference>
<dbReference type="FunFam" id="3.40.50.10330:FF:000008">
    <property type="entry name" value="Probable lipid kinase YegS"/>
    <property type="match status" value="1"/>
</dbReference>
<dbReference type="Gene3D" id="2.60.200.40">
    <property type="match status" value="1"/>
</dbReference>
<dbReference type="Gene3D" id="3.40.50.10330">
    <property type="entry name" value="Probable inorganic polyphosphate/atp-NAD kinase, domain 1"/>
    <property type="match status" value="1"/>
</dbReference>
<dbReference type="HAMAP" id="MF_01377">
    <property type="entry name" value="YegS"/>
    <property type="match status" value="1"/>
</dbReference>
<dbReference type="InterPro" id="IPR017438">
    <property type="entry name" value="ATP-NAD_kinase_N"/>
</dbReference>
<dbReference type="InterPro" id="IPR005218">
    <property type="entry name" value="Diacylglycerol/lipid_kinase"/>
</dbReference>
<dbReference type="InterPro" id="IPR001206">
    <property type="entry name" value="Diacylglycerol_kinase_cat_dom"/>
</dbReference>
<dbReference type="InterPro" id="IPR022433">
    <property type="entry name" value="Lip_kinase_YegS"/>
</dbReference>
<dbReference type="InterPro" id="IPR050187">
    <property type="entry name" value="Lipid_Phosphate_FormReg"/>
</dbReference>
<dbReference type="InterPro" id="IPR016064">
    <property type="entry name" value="NAD/diacylglycerol_kinase_sf"/>
</dbReference>
<dbReference type="InterPro" id="IPR045540">
    <property type="entry name" value="YegS/DAGK_C"/>
</dbReference>
<dbReference type="NCBIfam" id="TIGR03702">
    <property type="entry name" value="lip_kinase_YegS"/>
    <property type="match status" value="1"/>
</dbReference>
<dbReference type="NCBIfam" id="NF009602">
    <property type="entry name" value="PRK13054.1"/>
    <property type="match status" value="1"/>
</dbReference>
<dbReference type="NCBIfam" id="TIGR00147">
    <property type="entry name" value="YegS/Rv2252/BmrU family lipid kinase"/>
    <property type="match status" value="1"/>
</dbReference>
<dbReference type="PANTHER" id="PTHR12358:SF106">
    <property type="entry name" value="LIPID KINASE YEGS"/>
    <property type="match status" value="1"/>
</dbReference>
<dbReference type="PANTHER" id="PTHR12358">
    <property type="entry name" value="SPHINGOSINE KINASE"/>
    <property type="match status" value="1"/>
</dbReference>
<dbReference type="Pfam" id="PF00781">
    <property type="entry name" value="DAGK_cat"/>
    <property type="match status" value="1"/>
</dbReference>
<dbReference type="Pfam" id="PF19279">
    <property type="entry name" value="YegS_C"/>
    <property type="match status" value="1"/>
</dbReference>
<dbReference type="SMART" id="SM00046">
    <property type="entry name" value="DAGKc"/>
    <property type="match status" value="1"/>
</dbReference>
<dbReference type="SUPFAM" id="SSF111331">
    <property type="entry name" value="NAD kinase/diacylglycerol kinase-like"/>
    <property type="match status" value="1"/>
</dbReference>
<dbReference type="PROSITE" id="PS50146">
    <property type="entry name" value="DAGK"/>
    <property type="match status" value="1"/>
</dbReference>
<accession>B7M470</accession>
<reference key="1">
    <citation type="journal article" date="2009" name="PLoS Genet.">
        <title>Organised genome dynamics in the Escherichia coli species results in highly diverse adaptive paths.</title>
        <authorList>
            <person name="Touchon M."/>
            <person name="Hoede C."/>
            <person name="Tenaillon O."/>
            <person name="Barbe V."/>
            <person name="Baeriswyl S."/>
            <person name="Bidet P."/>
            <person name="Bingen E."/>
            <person name="Bonacorsi S."/>
            <person name="Bouchier C."/>
            <person name="Bouvet O."/>
            <person name="Calteau A."/>
            <person name="Chiapello H."/>
            <person name="Clermont O."/>
            <person name="Cruveiller S."/>
            <person name="Danchin A."/>
            <person name="Diard M."/>
            <person name="Dossat C."/>
            <person name="Karoui M.E."/>
            <person name="Frapy E."/>
            <person name="Garry L."/>
            <person name="Ghigo J.M."/>
            <person name="Gilles A.M."/>
            <person name="Johnson J."/>
            <person name="Le Bouguenec C."/>
            <person name="Lescat M."/>
            <person name="Mangenot S."/>
            <person name="Martinez-Jehanne V."/>
            <person name="Matic I."/>
            <person name="Nassif X."/>
            <person name="Oztas S."/>
            <person name="Petit M.A."/>
            <person name="Pichon C."/>
            <person name="Rouy Z."/>
            <person name="Ruf C.S."/>
            <person name="Schneider D."/>
            <person name="Tourret J."/>
            <person name="Vacherie B."/>
            <person name="Vallenet D."/>
            <person name="Medigue C."/>
            <person name="Rocha E.P.C."/>
            <person name="Denamur E."/>
        </authorList>
    </citation>
    <scope>NUCLEOTIDE SEQUENCE [LARGE SCALE GENOMIC DNA]</scope>
    <source>
        <strain>IAI1</strain>
    </source>
</reference>
<keyword id="KW-0067">ATP-binding</keyword>
<keyword id="KW-0963">Cytoplasm</keyword>
<keyword id="KW-0418">Kinase</keyword>
<keyword id="KW-0444">Lipid biosynthesis</keyword>
<keyword id="KW-0443">Lipid metabolism</keyword>
<keyword id="KW-0460">Magnesium</keyword>
<keyword id="KW-0479">Metal-binding</keyword>
<keyword id="KW-0547">Nucleotide-binding</keyword>
<keyword id="KW-0594">Phospholipid biosynthesis</keyword>
<keyword id="KW-1208">Phospholipid metabolism</keyword>
<keyword id="KW-0808">Transferase</keyword>
<evidence type="ECO:0000255" key="1">
    <source>
        <dbReference type="HAMAP-Rule" id="MF_01377"/>
    </source>
</evidence>
<feature type="chain" id="PRO_1000144865" description="Probable lipid kinase YegS">
    <location>
        <begin position="1"/>
        <end position="299"/>
    </location>
</feature>
<feature type="domain" description="DAGKc" evidence="1">
    <location>
        <begin position="2"/>
        <end position="133"/>
    </location>
</feature>
<feature type="active site" description="Proton acceptor" evidence="1">
    <location>
        <position position="271"/>
    </location>
</feature>
<feature type="binding site" evidence="1">
    <location>
        <position position="40"/>
    </location>
    <ligand>
        <name>ATP</name>
        <dbReference type="ChEBI" id="CHEBI:30616"/>
    </ligand>
</feature>
<feature type="binding site" evidence="1">
    <location>
        <begin position="66"/>
        <end position="72"/>
    </location>
    <ligand>
        <name>ATP</name>
        <dbReference type="ChEBI" id="CHEBI:30616"/>
    </ligand>
</feature>
<feature type="binding site" evidence="1">
    <location>
        <position position="95"/>
    </location>
    <ligand>
        <name>ATP</name>
        <dbReference type="ChEBI" id="CHEBI:30616"/>
    </ligand>
</feature>
<feature type="binding site" evidence="1">
    <location>
        <position position="215"/>
    </location>
    <ligand>
        <name>Mg(2+)</name>
        <dbReference type="ChEBI" id="CHEBI:18420"/>
    </ligand>
</feature>
<feature type="binding site" evidence="1">
    <location>
        <position position="218"/>
    </location>
    <ligand>
        <name>Mg(2+)</name>
        <dbReference type="ChEBI" id="CHEBI:18420"/>
    </ligand>
</feature>
<feature type="binding site" evidence="1">
    <location>
        <position position="220"/>
    </location>
    <ligand>
        <name>Mg(2+)</name>
        <dbReference type="ChEBI" id="CHEBI:18420"/>
    </ligand>
</feature>
<proteinExistence type="inferred from homology"/>
<protein>
    <recommendedName>
        <fullName evidence="1">Probable lipid kinase YegS</fullName>
        <ecNumber evidence="1">2.7.1.-</ecNumber>
    </recommendedName>
</protein>
<comment type="function">
    <text evidence="1">Probably phosphorylates lipids; the in vivo substrate is unknown.</text>
</comment>
<comment type="cofactor">
    <cofactor evidence="1">
        <name>Mg(2+)</name>
        <dbReference type="ChEBI" id="CHEBI:18420"/>
    </cofactor>
    <cofactor evidence="1">
        <name>Ca(2+)</name>
        <dbReference type="ChEBI" id="CHEBI:29108"/>
    </cofactor>
    <text evidence="1">Binds 1 Mg(2+) ion per subunit. Ca(2+) may be able to substitute.</text>
</comment>
<comment type="subcellular location">
    <subcellularLocation>
        <location evidence="1">Cytoplasm</location>
    </subcellularLocation>
</comment>
<comment type="similarity">
    <text evidence="1">Belongs to the diacylglycerol/lipid kinase family. YegS lipid kinase subfamily.</text>
</comment>